<organism>
    <name type="scientific">Escherichia coli (strain K12)</name>
    <dbReference type="NCBI Taxonomy" id="83333"/>
    <lineage>
        <taxon>Bacteria</taxon>
        <taxon>Pseudomonadati</taxon>
        <taxon>Pseudomonadota</taxon>
        <taxon>Gammaproteobacteria</taxon>
        <taxon>Enterobacterales</taxon>
        <taxon>Enterobacteriaceae</taxon>
        <taxon>Escherichia</taxon>
    </lineage>
</organism>
<feature type="chain" id="PRO_0000168919" description="ParB-like nuclease domain-containing protein YnaK">
    <location>
        <begin position="1"/>
        <end position="87"/>
    </location>
</feature>
<evidence type="ECO:0000305" key="1">
    <source>
    </source>
</evidence>
<gene>
    <name type="primary">ynaK</name>
    <name type="ordered locus">b1365</name>
    <name type="ordered locus">JW1359</name>
</gene>
<name>YNAK_ECOLI</name>
<dbReference type="EMBL" id="U00096">
    <property type="protein sequence ID" value="AAC74447.1"/>
    <property type="molecule type" value="Genomic_DNA"/>
</dbReference>
<dbReference type="EMBL" id="AP009048">
    <property type="protein sequence ID" value="BAE76417.1"/>
    <property type="molecule type" value="Genomic_DNA"/>
</dbReference>
<dbReference type="PIR" id="H64886">
    <property type="entry name" value="H64886"/>
</dbReference>
<dbReference type="RefSeq" id="NP_415883.1">
    <property type="nucleotide sequence ID" value="NC_000913.3"/>
</dbReference>
<dbReference type="RefSeq" id="WP_001350510.1">
    <property type="nucleotide sequence ID" value="NZ_JACEFS010000049.1"/>
</dbReference>
<dbReference type="SMR" id="P76068"/>
<dbReference type="BioGRID" id="4263251">
    <property type="interactions" value="82"/>
</dbReference>
<dbReference type="FunCoup" id="P76068">
    <property type="interactions" value="174"/>
</dbReference>
<dbReference type="IntAct" id="P76068">
    <property type="interactions" value="2"/>
</dbReference>
<dbReference type="STRING" id="511145.b1365"/>
<dbReference type="REBASE" id="157599">
    <property type="entry name" value="M1.Rso10709ORF2867P"/>
</dbReference>
<dbReference type="REBASE" id="157600">
    <property type="entry name" value="M2.Rso10709ORF2867P"/>
</dbReference>
<dbReference type="REBASE" id="157608">
    <property type="entry name" value="M1.Rso10709ORF7P"/>
</dbReference>
<dbReference type="PaxDb" id="511145-b1365"/>
<dbReference type="EnsemblBacteria" id="AAC74447">
    <property type="protein sequence ID" value="AAC74447"/>
    <property type="gene ID" value="b1365"/>
</dbReference>
<dbReference type="GeneID" id="947417"/>
<dbReference type="KEGG" id="ecj:JW1359"/>
<dbReference type="KEGG" id="eco:b1365"/>
<dbReference type="KEGG" id="ecoc:C3026_07975"/>
<dbReference type="PATRIC" id="fig|511145.12.peg.1423"/>
<dbReference type="EchoBASE" id="EB4044"/>
<dbReference type="eggNOG" id="COG1475">
    <property type="taxonomic scope" value="Bacteria"/>
</dbReference>
<dbReference type="HOGENOM" id="CLU_099062_2_1_6"/>
<dbReference type="InParanoid" id="P76068"/>
<dbReference type="OrthoDB" id="9816043at2"/>
<dbReference type="PhylomeDB" id="P76068"/>
<dbReference type="BioCyc" id="EcoCyc:G6688-MONOMER"/>
<dbReference type="PRO" id="PR:P76068"/>
<dbReference type="Proteomes" id="UP000000625">
    <property type="component" value="Chromosome"/>
</dbReference>
<dbReference type="CDD" id="cd16403">
    <property type="entry name" value="ParB_N_like_MT"/>
    <property type="match status" value="1"/>
</dbReference>
<dbReference type="Gene3D" id="3.90.1530.10">
    <property type="entry name" value="Conserved hypothetical protein from pyrococcus furiosus pfu- 392566-001, ParB domain"/>
    <property type="match status" value="1"/>
</dbReference>
<dbReference type="InterPro" id="IPR050336">
    <property type="entry name" value="Chromosome_partition/occlusion"/>
</dbReference>
<dbReference type="InterPro" id="IPR003115">
    <property type="entry name" value="ParB/Sulfiredoxin_dom"/>
</dbReference>
<dbReference type="InterPro" id="IPR036086">
    <property type="entry name" value="ParB/Sulfiredoxin_sf"/>
</dbReference>
<dbReference type="PANTHER" id="PTHR33375">
    <property type="entry name" value="CHROMOSOME-PARTITIONING PROTEIN PARB-RELATED"/>
    <property type="match status" value="1"/>
</dbReference>
<dbReference type="PANTHER" id="PTHR33375:SF1">
    <property type="entry name" value="CHROMOSOME-PARTITIONING PROTEIN PARB-RELATED"/>
    <property type="match status" value="1"/>
</dbReference>
<dbReference type="Pfam" id="PF02195">
    <property type="entry name" value="ParBc"/>
    <property type="match status" value="1"/>
</dbReference>
<dbReference type="SMART" id="SM00470">
    <property type="entry name" value="ParB"/>
    <property type="match status" value="1"/>
</dbReference>
<dbReference type="SUPFAM" id="SSF110849">
    <property type="entry name" value="ParB/Sulfiredoxin"/>
    <property type="match status" value="1"/>
</dbReference>
<proteinExistence type="predicted"/>
<keyword id="KW-1185">Reference proteome</keyword>
<accession>P76068</accession>
<accession>Q2MBD9</accession>
<protein>
    <recommendedName>
        <fullName>ParB-like nuclease domain-containing protein YnaK</fullName>
    </recommendedName>
</protein>
<comment type="miscellaneous">
    <text evidence="1">Encoded in the Rac prophage region.</text>
</comment>
<reference key="1">
    <citation type="journal article" date="1997" name="Science">
        <title>The complete genome sequence of Escherichia coli K-12.</title>
        <authorList>
            <person name="Blattner F.R."/>
            <person name="Plunkett G. III"/>
            <person name="Bloch C.A."/>
            <person name="Perna N.T."/>
            <person name="Burland V."/>
            <person name="Riley M."/>
            <person name="Collado-Vides J."/>
            <person name="Glasner J.D."/>
            <person name="Rode C.K."/>
            <person name="Mayhew G.F."/>
            <person name="Gregor J."/>
            <person name="Davis N.W."/>
            <person name="Kirkpatrick H.A."/>
            <person name="Goeden M.A."/>
            <person name="Rose D.J."/>
            <person name="Mau B."/>
            <person name="Shao Y."/>
        </authorList>
    </citation>
    <scope>NUCLEOTIDE SEQUENCE [LARGE SCALE GENOMIC DNA]</scope>
    <source>
        <strain>K12 / MG1655 / ATCC 47076</strain>
    </source>
</reference>
<reference key="2">
    <citation type="journal article" date="2006" name="Mol. Syst. Biol.">
        <title>Highly accurate genome sequences of Escherichia coli K-12 strains MG1655 and W3110.</title>
        <authorList>
            <person name="Hayashi K."/>
            <person name="Morooka N."/>
            <person name="Yamamoto Y."/>
            <person name="Fujita K."/>
            <person name="Isono K."/>
            <person name="Choi S."/>
            <person name="Ohtsubo E."/>
            <person name="Baba T."/>
            <person name="Wanner B.L."/>
            <person name="Mori H."/>
            <person name="Horiuchi T."/>
        </authorList>
    </citation>
    <scope>NUCLEOTIDE SEQUENCE [LARGE SCALE GENOMIC DNA]</scope>
    <source>
        <strain>K12 / W3110 / ATCC 27325 / DSM 5911</strain>
    </source>
</reference>
<sequence length="87" mass="9787">MSEKLKIVYRPLQELSPYAHNARTHSTEQVAQLVESIKQFGWTNPVLIDEKGEIIAGHGRVMAAEMLKMDSVPVIVLSGLTDEQKQR</sequence>